<sequence>MAKKALIQRELKRQKCVAQFAEKRKALKQAIKEASSLQEKLNLHRKLQQLPRNSSAVRLHNRCRVTGRPKGYFRDFGLSRHVLREMAHDCVLPGVTKSSF</sequence>
<accession>Q20EV0</accession>
<proteinExistence type="inferred from homology"/>
<name>RR14_OLTVI</name>
<dbReference type="EMBL" id="DQ291132">
    <property type="protein sequence ID" value="ABB81963.1"/>
    <property type="molecule type" value="Genomic_DNA"/>
</dbReference>
<dbReference type="RefSeq" id="YP_635895.1">
    <property type="nucleotide sequence ID" value="NC_008099.1"/>
</dbReference>
<dbReference type="SMR" id="Q20EV0"/>
<dbReference type="GeneID" id="4100101"/>
<dbReference type="GO" id="GO:0009507">
    <property type="term" value="C:chloroplast"/>
    <property type="evidence" value="ECO:0007669"/>
    <property type="project" value="UniProtKB-SubCell"/>
</dbReference>
<dbReference type="GO" id="GO:0015935">
    <property type="term" value="C:small ribosomal subunit"/>
    <property type="evidence" value="ECO:0007669"/>
    <property type="project" value="TreeGrafter"/>
</dbReference>
<dbReference type="GO" id="GO:0019843">
    <property type="term" value="F:rRNA binding"/>
    <property type="evidence" value="ECO:0007669"/>
    <property type="project" value="UniProtKB-UniRule"/>
</dbReference>
<dbReference type="GO" id="GO:0003735">
    <property type="term" value="F:structural constituent of ribosome"/>
    <property type="evidence" value="ECO:0007669"/>
    <property type="project" value="InterPro"/>
</dbReference>
<dbReference type="GO" id="GO:0006412">
    <property type="term" value="P:translation"/>
    <property type="evidence" value="ECO:0007669"/>
    <property type="project" value="UniProtKB-UniRule"/>
</dbReference>
<dbReference type="FunFam" id="1.10.287.1480:FF:000001">
    <property type="entry name" value="30S ribosomal protein S14"/>
    <property type="match status" value="1"/>
</dbReference>
<dbReference type="Gene3D" id="1.10.287.1480">
    <property type="match status" value="1"/>
</dbReference>
<dbReference type="HAMAP" id="MF_00537">
    <property type="entry name" value="Ribosomal_uS14_1"/>
    <property type="match status" value="1"/>
</dbReference>
<dbReference type="InterPro" id="IPR001209">
    <property type="entry name" value="Ribosomal_uS14"/>
</dbReference>
<dbReference type="InterPro" id="IPR023036">
    <property type="entry name" value="Ribosomal_uS14_bac/plastid"/>
</dbReference>
<dbReference type="InterPro" id="IPR018271">
    <property type="entry name" value="Ribosomal_uS14_CS"/>
</dbReference>
<dbReference type="NCBIfam" id="NF006477">
    <property type="entry name" value="PRK08881.1"/>
    <property type="match status" value="1"/>
</dbReference>
<dbReference type="PANTHER" id="PTHR19836">
    <property type="entry name" value="30S RIBOSOMAL PROTEIN S14"/>
    <property type="match status" value="1"/>
</dbReference>
<dbReference type="PANTHER" id="PTHR19836:SF19">
    <property type="entry name" value="SMALL RIBOSOMAL SUBUNIT PROTEIN US14M"/>
    <property type="match status" value="1"/>
</dbReference>
<dbReference type="Pfam" id="PF00253">
    <property type="entry name" value="Ribosomal_S14"/>
    <property type="match status" value="1"/>
</dbReference>
<dbReference type="SUPFAM" id="SSF57716">
    <property type="entry name" value="Glucocorticoid receptor-like (DNA-binding domain)"/>
    <property type="match status" value="1"/>
</dbReference>
<dbReference type="PROSITE" id="PS00527">
    <property type="entry name" value="RIBOSOMAL_S14"/>
    <property type="match status" value="1"/>
</dbReference>
<feature type="chain" id="PRO_0000276691" description="Small ribosomal subunit protein uS14c">
    <location>
        <begin position="1"/>
        <end position="100"/>
    </location>
</feature>
<reference key="1">
    <citation type="journal article" date="2006" name="BMC Biol.">
        <title>The complete chloroplast DNA sequence of the green alga Oltmannsiellopsis viridis reveals a distinctive quadripartite architecture in the chloroplast genome of early diverging ulvophytes.</title>
        <authorList>
            <person name="Pombert J.-F."/>
            <person name="Lemieux C."/>
            <person name="Turmel M."/>
        </authorList>
    </citation>
    <scope>NUCLEOTIDE SEQUENCE [LARGE SCALE GENOMIC DNA]</scope>
</reference>
<keyword id="KW-0150">Chloroplast</keyword>
<keyword id="KW-0934">Plastid</keyword>
<keyword id="KW-0687">Ribonucleoprotein</keyword>
<keyword id="KW-0689">Ribosomal protein</keyword>
<keyword id="KW-0694">RNA-binding</keyword>
<keyword id="KW-0699">rRNA-binding</keyword>
<gene>
    <name evidence="1" type="primary">rps14</name>
</gene>
<evidence type="ECO:0000255" key="1">
    <source>
        <dbReference type="HAMAP-Rule" id="MF_00537"/>
    </source>
</evidence>
<evidence type="ECO:0000305" key="2"/>
<organism>
    <name type="scientific">Oltmannsiellopsis viridis</name>
    <name type="common">Marine flagellate</name>
    <name type="synonym">Oltmannsiella viridis</name>
    <dbReference type="NCBI Taxonomy" id="51324"/>
    <lineage>
        <taxon>Eukaryota</taxon>
        <taxon>Viridiplantae</taxon>
        <taxon>Chlorophyta</taxon>
        <taxon>Ulvophyceae</taxon>
        <taxon>Oltmannsiellopsidales</taxon>
        <taxon>Oltmannsiellopsidaceae</taxon>
        <taxon>Oltmannsiellopsis</taxon>
    </lineage>
</organism>
<geneLocation type="chloroplast"/>
<protein>
    <recommendedName>
        <fullName evidence="1">Small ribosomal subunit protein uS14c</fullName>
    </recommendedName>
    <alternativeName>
        <fullName evidence="2">30S ribosomal protein S14, chloroplastic</fullName>
    </alternativeName>
</protein>
<comment type="function">
    <text evidence="1">Binds 16S rRNA, required for the assembly of 30S particles.</text>
</comment>
<comment type="subunit">
    <text evidence="1">Part of the 30S ribosomal subunit.</text>
</comment>
<comment type="subcellular location">
    <subcellularLocation>
        <location>Plastid</location>
        <location>Chloroplast</location>
    </subcellularLocation>
</comment>
<comment type="similarity">
    <text evidence="1">Belongs to the universal ribosomal protein uS14 family.</text>
</comment>